<gene>
    <name evidence="1" type="primary">dltC</name>
    <name type="ordered locus">BCAH820_1459</name>
</gene>
<keyword id="KW-0961">Cell wall biogenesis/degradation</keyword>
<keyword id="KW-0963">Cytoplasm</keyword>
<keyword id="KW-0596">Phosphopantetheine</keyword>
<keyword id="KW-0597">Phosphoprotein</keyword>
<comment type="function">
    <text evidence="1">Carrier protein involved in the D-alanylation of lipoteichoic acid (LTA). The loading of thioester-linked D-alanine onto DltC is catalyzed by D-alanine--D-alanyl carrier protein ligase DltA. The DltC-carried D-alanyl group is further transferred to cell membrane phosphatidylglycerol (PG) by forming an ester bond, probably catalyzed by DltD. D-alanylation of LTA plays an important role in modulating the properties of the cell wall in Gram-positive bacteria, influencing the net charge of the cell wall.</text>
</comment>
<comment type="pathway">
    <text evidence="1">Cell wall biogenesis; lipoteichoic acid biosynthesis.</text>
</comment>
<comment type="subcellular location">
    <subcellularLocation>
        <location evidence="1">Cytoplasm</location>
    </subcellularLocation>
</comment>
<comment type="PTM">
    <text evidence="1">4'-phosphopantetheine is transferred from CoA to a specific serine of apo-DCP.</text>
</comment>
<comment type="similarity">
    <text evidence="1">Belongs to the DltC family.</text>
</comment>
<dbReference type="EMBL" id="CP001283">
    <property type="protein sequence ID" value="ACK91519.1"/>
    <property type="molecule type" value="Genomic_DNA"/>
</dbReference>
<dbReference type="RefSeq" id="WP_000807310.1">
    <property type="nucleotide sequence ID" value="NC_011773.1"/>
</dbReference>
<dbReference type="SMR" id="B7JFV3"/>
<dbReference type="GeneID" id="93009671"/>
<dbReference type="KEGG" id="bcu:BCAH820_1459"/>
<dbReference type="HOGENOM" id="CLU_108696_19_0_9"/>
<dbReference type="UniPathway" id="UPA00556"/>
<dbReference type="Proteomes" id="UP000001363">
    <property type="component" value="Chromosome"/>
</dbReference>
<dbReference type="GO" id="GO:0005737">
    <property type="term" value="C:cytoplasm"/>
    <property type="evidence" value="ECO:0007669"/>
    <property type="project" value="UniProtKB-SubCell"/>
</dbReference>
<dbReference type="GO" id="GO:0036370">
    <property type="term" value="F:D-alanyl carrier activity"/>
    <property type="evidence" value="ECO:0007669"/>
    <property type="project" value="UniProtKB-UniRule"/>
</dbReference>
<dbReference type="GO" id="GO:0071555">
    <property type="term" value="P:cell wall organization"/>
    <property type="evidence" value="ECO:0007669"/>
    <property type="project" value="UniProtKB-KW"/>
</dbReference>
<dbReference type="GO" id="GO:0070395">
    <property type="term" value="P:lipoteichoic acid biosynthetic process"/>
    <property type="evidence" value="ECO:0007669"/>
    <property type="project" value="UniProtKB-UniRule"/>
</dbReference>
<dbReference type="FunFam" id="1.10.1200.10:FF:000004">
    <property type="entry name" value="D-alanyl carrier protein"/>
    <property type="match status" value="1"/>
</dbReference>
<dbReference type="Gene3D" id="1.10.1200.10">
    <property type="entry name" value="ACP-like"/>
    <property type="match status" value="1"/>
</dbReference>
<dbReference type="HAMAP" id="MF_00565">
    <property type="entry name" value="DltC"/>
    <property type="match status" value="1"/>
</dbReference>
<dbReference type="InterPro" id="IPR036736">
    <property type="entry name" value="ACP-like_sf"/>
</dbReference>
<dbReference type="InterPro" id="IPR003230">
    <property type="entry name" value="DltC"/>
</dbReference>
<dbReference type="InterPro" id="IPR009081">
    <property type="entry name" value="PP-bd_ACP"/>
</dbReference>
<dbReference type="NCBIfam" id="TIGR01688">
    <property type="entry name" value="dltC"/>
    <property type="match status" value="1"/>
</dbReference>
<dbReference type="NCBIfam" id="NF003464">
    <property type="entry name" value="PRK05087.1"/>
    <property type="match status" value="1"/>
</dbReference>
<dbReference type="Pfam" id="PF00550">
    <property type="entry name" value="PP-binding"/>
    <property type="match status" value="1"/>
</dbReference>
<dbReference type="SUPFAM" id="SSF47336">
    <property type="entry name" value="ACP-like"/>
    <property type="match status" value="1"/>
</dbReference>
<dbReference type="PROSITE" id="PS50075">
    <property type="entry name" value="CARRIER"/>
    <property type="match status" value="1"/>
</dbReference>
<sequence length="79" mass="9261">MAEFKEQVLDILEEVCENDIVKENLDVQLFEEGILDSFAVVSLLVEFQERLDIEVSISDFDRDEWATPNMVIKKLEEIR</sequence>
<accession>B7JFV3</accession>
<feature type="chain" id="PRO_1000129394" description="D-alanyl carrier protein">
    <location>
        <begin position="1"/>
        <end position="79"/>
    </location>
</feature>
<feature type="domain" description="Carrier" evidence="1">
    <location>
        <begin position="2"/>
        <end position="79"/>
    </location>
</feature>
<feature type="modified residue" description="O-(pantetheine 4'-phosphoryl)serine" evidence="1">
    <location>
        <position position="37"/>
    </location>
</feature>
<organism>
    <name type="scientific">Bacillus cereus (strain AH820)</name>
    <dbReference type="NCBI Taxonomy" id="405535"/>
    <lineage>
        <taxon>Bacteria</taxon>
        <taxon>Bacillati</taxon>
        <taxon>Bacillota</taxon>
        <taxon>Bacilli</taxon>
        <taxon>Bacillales</taxon>
        <taxon>Bacillaceae</taxon>
        <taxon>Bacillus</taxon>
        <taxon>Bacillus cereus group</taxon>
    </lineage>
</organism>
<protein>
    <recommendedName>
        <fullName evidence="1">D-alanyl carrier protein</fullName>
        <shortName evidence="1">DCP</shortName>
    </recommendedName>
    <alternativeName>
        <fullName evidence="1">D-alanine--poly(phosphoribitol) ligase subunit 2</fullName>
    </alternativeName>
</protein>
<name>DLTC_BACC0</name>
<reference key="1">
    <citation type="submission" date="2008-10" db="EMBL/GenBank/DDBJ databases">
        <title>Genome sequence of Bacillus cereus AH820.</title>
        <authorList>
            <person name="Dodson R.J."/>
            <person name="Durkin A.S."/>
            <person name="Rosovitz M.J."/>
            <person name="Rasko D.A."/>
            <person name="Hoffmaster A."/>
            <person name="Ravel J."/>
            <person name="Sutton G."/>
        </authorList>
    </citation>
    <scope>NUCLEOTIDE SEQUENCE [LARGE SCALE GENOMIC DNA]</scope>
    <source>
        <strain>AH820</strain>
    </source>
</reference>
<proteinExistence type="inferred from homology"/>
<evidence type="ECO:0000255" key="1">
    <source>
        <dbReference type="HAMAP-Rule" id="MF_00565"/>
    </source>
</evidence>